<accession>Q9XNW9</accession>
<comment type="function">
    <text evidence="2">Component of the ubiquinol-cytochrome c reductase complex (complex III or cytochrome b-c1 complex) that is part of the mitochondrial respiratory chain. The b-c1 complex mediates electron transfer from ubiquinol to cytochrome c. Contributes to the generation of a proton gradient across the mitochondrial membrane that is then used for ATP synthesis.</text>
</comment>
<comment type="cofactor">
    <cofactor evidence="2">
        <name>heme b</name>
        <dbReference type="ChEBI" id="CHEBI:60344"/>
    </cofactor>
    <text evidence="2">Binds 2 heme b groups non-covalently.</text>
</comment>
<comment type="subunit">
    <text evidence="2">The cytochrome bc1 complex contains 11 subunits: 3 respiratory subunits (MT-CYB, CYC1 and UQCRFS1), 2 core proteins (UQCRC1 and UQCRC2) and 6 low-molecular weight proteins (UQCRH/QCR6, UQCRB/QCR7, UQCRQ/QCR8, UQCR10/QCR9, UQCR11/QCR10 and a cleavage product of UQCRFS1). This cytochrome bc1 complex then forms a dimer.</text>
</comment>
<comment type="subcellular location">
    <subcellularLocation>
        <location evidence="2">Mitochondrion inner membrane</location>
        <topology evidence="2">Multi-pass membrane protein</topology>
    </subcellularLocation>
</comment>
<comment type="miscellaneous">
    <text evidence="1">Heme 1 (or BL or b562) is low-potential and absorbs at about 562 nm, and heme 2 (or BH or b566) is high-potential and absorbs at about 566 nm.</text>
</comment>
<comment type="similarity">
    <text evidence="3 4">Belongs to the cytochrome b family.</text>
</comment>
<comment type="caution">
    <text evidence="2">The full-length protein contains only eight transmembrane helices, not nine as predicted by bioinformatics tools.</text>
</comment>
<protein>
    <recommendedName>
        <fullName>Cytochrome b</fullName>
    </recommendedName>
    <alternativeName>
        <fullName>Complex III subunit 3</fullName>
    </alternativeName>
    <alternativeName>
        <fullName>Complex III subunit III</fullName>
    </alternativeName>
    <alternativeName>
        <fullName>Cytochrome b-c1 complex subunit 3</fullName>
    </alternativeName>
    <alternativeName>
        <fullName>Ubiquinol-cytochrome-c reductase complex cytochrome b subunit</fullName>
    </alternativeName>
</protein>
<geneLocation type="mitochondrion"/>
<proteinExistence type="inferred from homology"/>
<organism>
    <name type="scientific">Thomasomys ischyrus</name>
    <name type="common">Strong-tailed oldfield mouse</name>
    <dbReference type="NCBI Taxonomy" id="3144150"/>
    <lineage>
        <taxon>Eukaryota</taxon>
        <taxon>Metazoa</taxon>
        <taxon>Chordata</taxon>
        <taxon>Craniata</taxon>
        <taxon>Vertebrata</taxon>
        <taxon>Euteleostomi</taxon>
        <taxon>Mammalia</taxon>
        <taxon>Eutheria</taxon>
        <taxon>Euarchontoglires</taxon>
        <taxon>Glires</taxon>
        <taxon>Rodentia</taxon>
        <taxon>Myomorpha</taxon>
        <taxon>Muroidea</taxon>
        <taxon>Cricetidae</taxon>
        <taxon>Sigmodontinae</taxon>
        <taxon>Thomasomys</taxon>
    </lineage>
</organism>
<sequence>MTIMRKKHPLLKLINHSFIDLPAPSNISSWWNFGSLLGVCLMIQIMTGLFLAMHYTSDTTTAFSSVAHICRDVNYGWLIRYLHANGASMFFICLFIHVGRGIYYGSYMLLETWNIGIILFLTTMATAFVGYVLPXXQMSFWGATVITNLLSAIPYIGNTLLEWIWGGFSVDKATLTRFFAFHFILPFIITALVLVHLLFLHETGSNNPSGLNSNSDKIPFHPYYTIKDLLGVLLLLMVLMILVLFFPDILGDPDNYTPANPLNTPAHIKPEWYFLFAYAILRSIPNKLGGVLALILSILILAAFPFLNSSKQHGLVYRPITQFLYWIFIANLLILTWIGGQPVEYPFTTIGQISSILYFTIIVVLMPVANMIENNILXLH</sequence>
<gene>
    <name type="primary">MT-CYB</name>
    <name type="synonym">COB</name>
    <name type="synonym">CYTB</name>
    <name type="synonym">MTCYB</name>
</gene>
<dbReference type="EMBL" id="AF108675">
    <property type="protein sequence ID" value="AAD45457.1"/>
    <property type="molecule type" value="Genomic_DNA"/>
</dbReference>
<dbReference type="GO" id="GO:0005743">
    <property type="term" value="C:mitochondrial inner membrane"/>
    <property type="evidence" value="ECO:0007669"/>
    <property type="project" value="UniProtKB-SubCell"/>
</dbReference>
<dbReference type="GO" id="GO:0045275">
    <property type="term" value="C:respiratory chain complex III"/>
    <property type="evidence" value="ECO:0007669"/>
    <property type="project" value="InterPro"/>
</dbReference>
<dbReference type="GO" id="GO:0046872">
    <property type="term" value="F:metal ion binding"/>
    <property type="evidence" value="ECO:0007669"/>
    <property type="project" value="UniProtKB-KW"/>
</dbReference>
<dbReference type="GO" id="GO:0008121">
    <property type="term" value="F:ubiquinol-cytochrome-c reductase activity"/>
    <property type="evidence" value="ECO:0007669"/>
    <property type="project" value="InterPro"/>
</dbReference>
<dbReference type="GO" id="GO:0006122">
    <property type="term" value="P:mitochondrial electron transport, ubiquinol to cytochrome c"/>
    <property type="evidence" value="ECO:0007669"/>
    <property type="project" value="TreeGrafter"/>
</dbReference>
<dbReference type="CDD" id="cd00290">
    <property type="entry name" value="cytochrome_b_C"/>
    <property type="match status" value="1"/>
</dbReference>
<dbReference type="CDD" id="cd00284">
    <property type="entry name" value="Cytochrome_b_N"/>
    <property type="match status" value="1"/>
</dbReference>
<dbReference type="FunFam" id="1.20.810.10:FF:000002">
    <property type="entry name" value="Cytochrome b"/>
    <property type="match status" value="1"/>
</dbReference>
<dbReference type="Gene3D" id="1.20.810.10">
    <property type="entry name" value="Cytochrome Bc1 Complex, Chain C"/>
    <property type="match status" value="1"/>
</dbReference>
<dbReference type="InterPro" id="IPR005798">
    <property type="entry name" value="Cyt_b/b6_C"/>
</dbReference>
<dbReference type="InterPro" id="IPR036150">
    <property type="entry name" value="Cyt_b/b6_C_sf"/>
</dbReference>
<dbReference type="InterPro" id="IPR005797">
    <property type="entry name" value="Cyt_b/b6_N"/>
</dbReference>
<dbReference type="InterPro" id="IPR027387">
    <property type="entry name" value="Cytb/b6-like_sf"/>
</dbReference>
<dbReference type="InterPro" id="IPR030689">
    <property type="entry name" value="Cytochrome_b"/>
</dbReference>
<dbReference type="InterPro" id="IPR048260">
    <property type="entry name" value="Cytochrome_b_C_euk/bac"/>
</dbReference>
<dbReference type="InterPro" id="IPR048259">
    <property type="entry name" value="Cytochrome_b_N_euk/bac"/>
</dbReference>
<dbReference type="InterPro" id="IPR016174">
    <property type="entry name" value="Di-haem_cyt_TM"/>
</dbReference>
<dbReference type="PANTHER" id="PTHR19271">
    <property type="entry name" value="CYTOCHROME B"/>
    <property type="match status" value="1"/>
</dbReference>
<dbReference type="PANTHER" id="PTHR19271:SF16">
    <property type="entry name" value="CYTOCHROME B"/>
    <property type="match status" value="1"/>
</dbReference>
<dbReference type="Pfam" id="PF00032">
    <property type="entry name" value="Cytochrom_B_C"/>
    <property type="match status" value="1"/>
</dbReference>
<dbReference type="Pfam" id="PF00033">
    <property type="entry name" value="Cytochrome_B"/>
    <property type="match status" value="1"/>
</dbReference>
<dbReference type="PIRSF" id="PIRSF038885">
    <property type="entry name" value="COB"/>
    <property type="match status" value="1"/>
</dbReference>
<dbReference type="SUPFAM" id="SSF81648">
    <property type="entry name" value="a domain/subunit of cytochrome bc1 complex (Ubiquinol-cytochrome c reductase)"/>
    <property type="match status" value="1"/>
</dbReference>
<dbReference type="SUPFAM" id="SSF81342">
    <property type="entry name" value="Transmembrane di-heme cytochromes"/>
    <property type="match status" value="1"/>
</dbReference>
<dbReference type="PROSITE" id="PS51003">
    <property type="entry name" value="CYTB_CTER"/>
    <property type="match status" value="1"/>
</dbReference>
<dbReference type="PROSITE" id="PS51002">
    <property type="entry name" value="CYTB_NTER"/>
    <property type="match status" value="1"/>
</dbReference>
<name>CYB_THOIS</name>
<feature type="chain" id="PRO_0000061660" description="Cytochrome b">
    <location>
        <begin position="1"/>
        <end position="380"/>
    </location>
</feature>
<feature type="transmembrane region" description="Helical" evidence="2">
    <location>
        <begin position="33"/>
        <end position="53"/>
    </location>
</feature>
<feature type="transmembrane region" description="Helical" evidence="2">
    <location>
        <begin position="77"/>
        <end position="98"/>
    </location>
</feature>
<feature type="transmembrane region" description="Helical" evidence="2">
    <location>
        <begin position="113"/>
        <end position="133"/>
    </location>
</feature>
<feature type="transmembrane region" description="Helical" evidence="2">
    <location>
        <begin position="178"/>
        <end position="198"/>
    </location>
</feature>
<feature type="transmembrane region" description="Helical" evidence="2">
    <location>
        <begin position="226"/>
        <end position="246"/>
    </location>
</feature>
<feature type="transmembrane region" description="Helical" evidence="2">
    <location>
        <begin position="288"/>
        <end position="308"/>
    </location>
</feature>
<feature type="transmembrane region" description="Helical" evidence="2">
    <location>
        <begin position="320"/>
        <end position="340"/>
    </location>
</feature>
<feature type="transmembrane region" description="Helical" evidence="2">
    <location>
        <begin position="347"/>
        <end position="367"/>
    </location>
</feature>
<feature type="binding site" description="axial binding residue" evidence="2">
    <location>
        <position position="83"/>
    </location>
    <ligand>
        <name>heme b</name>
        <dbReference type="ChEBI" id="CHEBI:60344"/>
        <label>b562</label>
    </ligand>
    <ligandPart>
        <name>Fe</name>
        <dbReference type="ChEBI" id="CHEBI:18248"/>
    </ligandPart>
</feature>
<feature type="binding site" description="axial binding residue" evidence="2">
    <location>
        <position position="97"/>
    </location>
    <ligand>
        <name>heme b</name>
        <dbReference type="ChEBI" id="CHEBI:60344"/>
        <label>b566</label>
    </ligand>
    <ligandPart>
        <name>Fe</name>
        <dbReference type="ChEBI" id="CHEBI:18248"/>
    </ligandPart>
</feature>
<feature type="binding site" description="axial binding residue" evidence="2">
    <location>
        <position position="182"/>
    </location>
    <ligand>
        <name>heme b</name>
        <dbReference type="ChEBI" id="CHEBI:60344"/>
        <label>b562</label>
    </ligand>
    <ligandPart>
        <name>Fe</name>
        <dbReference type="ChEBI" id="CHEBI:18248"/>
    </ligandPart>
</feature>
<feature type="binding site" description="axial binding residue" evidence="2">
    <location>
        <position position="196"/>
    </location>
    <ligand>
        <name>heme b</name>
        <dbReference type="ChEBI" id="CHEBI:60344"/>
        <label>b566</label>
    </ligand>
    <ligandPart>
        <name>Fe</name>
        <dbReference type="ChEBI" id="CHEBI:18248"/>
    </ligandPart>
</feature>
<feature type="binding site" evidence="2">
    <location>
        <position position="201"/>
    </location>
    <ligand>
        <name>a ubiquinone</name>
        <dbReference type="ChEBI" id="CHEBI:16389"/>
    </ligand>
</feature>
<reference key="1">
    <citation type="journal article" date="1999" name="J. Mammal. Evol.">
        <title>Phylogenetic relationships and the radiation of sigmodontine rodents in South America: evidence from cytochrome b.</title>
        <authorList>
            <person name="Smith M.F."/>
            <person name="Patton J.L."/>
        </authorList>
    </citation>
    <scope>NUCLEOTIDE SEQUENCE [GENOMIC DNA]</scope>
    <source>
        <strain>Isolate MVZ 181999</strain>
    </source>
</reference>
<keyword id="KW-0249">Electron transport</keyword>
<keyword id="KW-0349">Heme</keyword>
<keyword id="KW-0408">Iron</keyword>
<keyword id="KW-0472">Membrane</keyword>
<keyword id="KW-0479">Metal-binding</keyword>
<keyword id="KW-0496">Mitochondrion</keyword>
<keyword id="KW-0999">Mitochondrion inner membrane</keyword>
<keyword id="KW-0679">Respiratory chain</keyword>
<keyword id="KW-0812">Transmembrane</keyword>
<keyword id="KW-1133">Transmembrane helix</keyword>
<keyword id="KW-0813">Transport</keyword>
<keyword id="KW-0830">Ubiquinone</keyword>
<evidence type="ECO:0000250" key="1"/>
<evidence type="ECO:0000250" key="2">
    <source>
        <dbReference type="UniProtKB" id="P00157"/>
    </source>
</evidence>
<evidence type="ECO:0000255" key="3">
    <source>
        <dbReference type="PROSITE-ProRule" id="PRU00967"/>
    </source>
</evidence>
<evidence type="ECO:0000255" key="4">
    <source>
        <dbReference type="PROSITE-ProRule" id="PRU00968"/>
    </source>
</evidence>